<accession>Q1J6K1</accession>
<sequence length="263" mass="28688">MPTSIKAIKESLEAVTSLLDPLFQELATDARLGVQKALKSRQKAIQTDLAEEERLEAMLSYEKALYKKGYQAIAGIDEVGRGPLAGPVVAACVILPKYCKIKGLNDSKKIPKAKHETIYQAVKEKALAIGIGIIDNQLIDEVNIYEATKLAMLEAIKQLEGQLTQPDYLLIDAMTLDIAISQQSIIKGDANSLSIAAASIVAKVTRDQMMANYDRIFPGYGFAKNAGYGTKEHLQGLKAYGITPIHRKSFEPVKSMCCDSTNP</sequence>
<protein>
    <recommendedName>
        <fullName evidence="1">Ribonuclease HII</fullName>
        <shortName evidence="1">RNase HII</shortName>
        <ecNumber evidence="1">3.1.26.4</ecNumber>
    </recommendedName>
</protein>
<name>RNH2_STRPF</name>
<gene>
    <name evidence="1" type="primary">rnhB</name>
    <name type="ordered locus">MGAS10750_Spy1032</name>
</gene>
<feature type="chain" id="PRO_1000031214" description="Ribonuclease HII">
    <location>
        <begin position="1"/>
        <end position="263"/>
    </location>
</feature>
<feature type="domain" description="RNase H type-2" evidence="2">
    <location>
        <begin position="71"/>
        <end position="262"/>
    </location>
</feature>
<feature type="binding site" evidence="1">
    <location>
        <position position="77"/>
    </location>
    <ligand>
        <name>a divalent metal cation</name>
        <dbReference type="ChEBI" id="CHEBI:60240"/>
    </ligand>
</feature>
<feature type="binding site" evidence="1">
    <location>
        <position position="78"/>
    </location>
    <ligand>
        <name>a divalent metal cation</name>
        <dbReference type="ChEBI" id="CHEBI:60240"/>
    </ligand>
</feature>
<feature type="binding site" evidence="1">
    <location>
        <position position="172"/>
    </location>
    <ligand>
        <name>a divalent metal cation</name>
        <dbReference type="ChEBI" id="CHEBI:60240"/>
    </ligand>
</feature>
<reference key="1">
    <citation type="journal article" date="2006" name="Proc. Natl. Acad. Sci. U.S.A.">
        <title>Molecular genetic anatomy of inter- and intraserotype variation in the human bacterial pathogen group A Streptococcus.</title>
        <authorList>
            <person name="Beres S.B."/>
            <person name="Richter E.W."/>
            <person name="Nagiec M.J."/>
            <person name="Sumby P."/>
            <person name="Porcella S.F."/>
            <person name="DeLeo F.R."/>
            <person name="Musser J.M."/>
        </authorList>
    </citation>
    <scope>NUCLEOTIDE SEQUENCE [LARGE SCALE GENOMIC DNA]</scope>
    <source>
        <strain>MGAS10750</strain>
    </source>
</reference>
<dbReference type="EC" id="3.1.26.4" evidence="1"/>
<dbReference type="EMBL" id="CP000262">
    <property type="protein sequence ID" value="ABF37982.1"/>
    <property type="molecule type" value="Genomic_DNA"/>
</dbReference>
<dbReference type="SMR" id="Q1J6K1"/>
<dbReference type="KEGG" id="spi:MGAS10750_Spy1032"/>
<dbReference type="HOGENOM" id="CLU_036532_2_1_9"/>
<dbReference type="Proteomes" id="UP000002434">
    <property type="component" value="Chromosome"/>
</dbReference>
<dbReference type="GO" id="GO:0005737">
    <property type="term" value="C:cytoplasm"/>
    <property type="evidence" value="ECO:0007669"/>
    <property type="project" value="UniProtKB-SubCell"/>
</dbReference>
<dbReference type="GO" id="GO:0032299">
    <property type="term" value="C:ribonuclease H2 complex"/>
    <property type="evidence" value="ECO:0007669"/>
    <property type="project" value="TreeGrafter"/>
</dbReference>
<dbReference type="GO" id="GO:0030145">
    <property type="term" value="F:manganese ion binding"/>
    <property type="evidence" value="ECO:0007669"/>
    <property type="project" value="UniProtKB-UniRule"/>
</dbReference>
<dbReference type="GO" id="GO:0003723">
    <property type="term" value="F:RNA binding"/>
    <property type="evidence" value="ECO:0007669"/>
    <property type="project" value="InterPro"/>
</dbReference>
<dbReference type="GO" id="GO:0004523">
    <property type="term" value="F:RNA-DNA hybrid ribonuclease activity"/>
    <property type="evidence" value="ECO:0007669"/>
    <property type="project" value="UniProtKB-UniRule"/>
</dbReference>
<dbReference type="GO" id="GO:0043137">
    <property type="term" value="P:DNA replication, removal of RNA primer"/>
    <property type="evidence" value="ECO:0007669"/>
    <property type="project" value="TreeGrafter"/>
</dbReference>
<dbReference type="GO" id="GO:0006298">
    <property type="term" value="P:mismatch repair"/>
    <property type="evidence" value="ECO:0007669"/>
    <property type="project" value="TreeGrafter"/>
</dbReference>
<dbReference type="CDD" id="cd07182">
    <property type="entry name" value="RNase_HII_bacteria_HII_like"/>
    <property type="match status" value="1"/>
</dbReference>
<dbReference type="FunFam" id="3.30.420.10:FF:000006">
    <property type="entry name" value="Ribonuclease HII"/>
    <property type="match status" value="1"/>
</dbReference>
<dbReference type="Gene3D" id="3.30.420.10">
    <property type="entry name" value="Ribonuclease H-like superfamily/Ribonuclease H"/>
    <property type="match status" value="1"/>
</dbReference>
<dbReference type="HAMAP" id="MF_00052_B">
    <property type="entry name" value="RNase_HII_B"/>
    <property type="match status" value="1"/>
</dbReference>
<dbReference type="InterPro" id="IPR022898">
    <property type="entry name" value="RNase_HII"/>
</dbReference>
<dbReference type="InterPro" id="IPR001352">
    <property type="entry name" value="RNase_HII/HIII"/>
</dbReference>
<dbReference type="InterPro" id="IPR024567">
    <property type="entry name" value="RNase_HII/HIII_dom"/>
</dbReference>
<dbReference type="InterPro" id="IPR012337">
    <property type="entry name" value="RNaseH-like_sf"/>
</dbReference>
<dbReference type="InterPro" id="IPR036397">
    <property type="entry name" value="RNaseH_sf"/>
</dbReference>
<dbReference type="NCBIfam" id="NF000594">
    <property type="entry name" value="PRK00015.1-1"/>
    <property type="match status" value="1"/>
</dbReference>
<dbReference type="NCBIfam" id="NF000595">
    <property type="entry name" value="PRK00015.1-3"/>
    <property type="match status" value="1"/>
</dbReference>
<dbReference type="PANTHER" id="PTHR10954">
    <property type="entry name" value="RIBONUCLEASE H2 SUBUNIT A"/>
    <property type="match status" value="1"/>
</dbReference>
<dbReference type="PANTHER" id="PTHR10954:SF18">
    <property type="entry name" value="RIBONUCLEASE HII"/>
    <property type="match status" value="1"/>
</dbReference>
<dbReference type="Pfam" id="PF01351">
    <property type="entry name" value="RNase_HII"/>
    <property type="match status" value="1"/>
</dbReference>
<dbReference type="SUPFAM" id="SSF53098">
    <property type="entry name" value="Ribonuclease H-like"/>
    <property type="match status" value="1"/>
</dbReference>
<dbReference type="PROSITE" id="PS51975">
    <property type="entry name" value="RNASE_H_2"/>
    <property type="match status" value="1"/>
</dbReference>
<evidence type="ECO:0000255" key="1">
    <source>
        <dbReference type="HAMAP-Rule" id="MF_00052"/>
    </source>
</evidence>
<evidence type="ECO:0000255" key="2">
    <source>
        <dbReference type="PROSITE-ProRule" id="PRU01319"/>
    </source>
</evidence>
<organism>
    <name type="scientific">Streptococcus pyogenes serotype M4 (strain MGAS10750)</name>
    <dbReference type="NCBI Taxonomy" id="370554"/>
    <lineage>
        <taxon>Bacteria</taxon>
        <taxon>Bacillati</taxon>
        <taxon>Bacillota</taxon>
        <taxon>Bacilli</taxon>
        <taxon>Lactobacillales</taxon>
        <taxon>Streptococcaceae</taxon>
        <taxon>Streptococcus</taxon>
    </lineage>
</organism>
<keyword id="KW-0963">Cytoplasm</keyword>
<keyword id="KW-0255">Endonuclease</keyword>
<keyword id="KW-0378">Hydrolase</keyword>
<keyword id="KW-0464">Manganese</keyword>
<keyword id="KW-0479">Metal-binding</keyword>
<keyword id="KW-0540">Nuclease</keyword>
<comment type="function">
    <text evidence="1">Endonuclease that specifically degrades the RNA of RNA-DNA hybrids.</text>
</comment>
<comment type="catalytic activity">
    <reaction evidence="1">
        <text>Endonucleolytic cleavage to 5'-phosphomonoester.</text>
        <dbReference type="EC" id="3.1.26.4"/>
    </reaction>
</comment>
<comment type="cofactor">
    <cofactor evidence="1">
        <name>Mn(2+)</name>
        <dbReference type="ChEBI" id="CHEBI:29035"/>
    </cofactor>
    <cofactor evidence="1">
        <name>Mg(2+)</name>
        <dbReference type="ChEBI" id="CHEBI:18420"/>
    </cofactor>
    <text evidence="1">Manganese or magnesium. Binds 1 divalent metal ion per monomer in the absence of substrate. May bind a second metal ion after substrate binding.</text>
</comment>
<comment type="subcellular location">
    <subcellularLocation>
        <location evidence="1">Cytoplasm</location>
    </subcellularLocation>
</comment>
<comment type="similarity">
    <text evidence="1">Belongs to the RNase HII family.</text>
</comment>
<proteinExistence type="inferred from homology"/>